<accession>Q52996</accession>
<name>Y369_RHIME</name>
<evidence type="ECO:0000305" key="1"/>
<proteinExistence type="inferred from homology"/>
<dbReference type="EMBL" id="L39265">
    <property type="protein sequence ID" value="AAA91098.1"/>
    <property type="molecule type" value="Genomic_DNA"/>
</dbReference>
<dbReference type="EMBL" id="AL591688">
    <property type="protein sequence ID" value="CAC41806.1"/>
    <property type="molecule type" value="Genomic_DNA"/>
</dbReference>
<dbReference type="RefSeq" id="NP_384475.1">
    <property type="nucleotide sequence ID" value="NC_003047.1"/>
</dbReference>
<dbReference type="RefSeq" id="WP_003527752.1">
    <property type="nucleotide sequence ID" value="NC_003047.1"/>
</dbReference>
<dbReference type="SMR" id="Q52996"/>
<dbReference type="EnsemblBacteria" id="CAC41806">
    <property type="protein sequence ID" value="CAC41806"/>
    <property type="gene ID" value="SMc01151"/>
</dbReference>
<dbReference type="KEGG" id="sme:SMc01151"/>
<dbReference type="PATRIC" id="fig|266834.11.peg.1741"/>
<dbReference type="eggNOG" id="COG3795">
    <property type="taxonomic scope" value="Bacteria"/>
</dbReference>
<dbReference type="HOGENOM" id="CLU_130902_2_0_5"/>
<dbReference type="OrthoDB" id="9807535at2"/>
<dbReference type="Proteomes" id="UP000001976">
    <property type="component" value="Chromosome"/>
</dbReference>
<dbReference type="Gene3D" id="3.30.70.1060">
    <property type="entry name" value="Dimeric alpha+beta barrel"/>
    <property type="match status" value="1"/>
</dbReference>
<dbReference type="InterPro" id="IPR011008">
    <property type="entry name" value="Dimeric_a/b-barrel"/>
</dbReference>
<dbReference type="InterPro" id="IPR005545">
    <property type="entry name" value="YCII"/>
</dbReference>
<dbReference type="PANTHER" id="PTHR35174:SF3">
    <property type="entry name" value="BLL7171 PROTEIN"/>
    <property type="match status" value="1"/>
</dbReference>
<dbReference type="PANTHER" id="PTHR35174">
    <property type="entry name" value="BLL7171 PROTEIN-RELATED"/>
    <property type="match status" value="1"/>
</dbReference>
<dbReference type="Pfam" id="PF03795">
    <property type="entry name" value="YCII"/>
    <property type="match status" value="1"/>
</dbReference>
<dbReference type="SUPFAM" id="SSF54909">
    <property type="entry name" value="Dimeric alpha+beta barrel"/>
    <property type="match status" value="1"/>
</dbReference>
<gene>
    <name type="ordered locus">R00369</name>
    <name type="ORF">SMc01151</name>
</gene>
<keyword id="KW-1185">Reference proteome</keyword>
<reference key="1">
    <citation type="journal article" date="1995" name="J. Bacteriol.">
        <title>The dnaA gene of Rhizobium meliloti lies within an unusual gene arrangement.</title>
        <authorList>
            <person name="Margolin W."/>
            <person name="Bramhill D."/>
            <person name="Long S.R."/>
        </authorList>
    </citation>
    <scope>NUCLEOTIDE SEQUENCE [GENOMIC DNA]</scope>
    <source>
        <strain>1021</strain>
    </source>
</reference>
<reference key="2">
    <citation type="journal article" date="2001" name="Proc. Natl. Acad. Sci. U.S.A.">
        <title>Analysis of the chromosome sequence of the legume symbiont Sinorhizobium meliloti strain 1021.</title>
        <authorList>
            <person name="Capela D."/>
            <person name="Barloy-Hubler F."/>
            <person name="Gouzy J."/>
            <person name="Bothe G."/>
            <person name="Ampe F."/>
            <person name="Batut J."/>
            <person name="Boistard P."/>
            <person name="Becker A."/>
            <person name="Boutry M."/>
            <person name="Cadieu E."/>
            <person name="Dreano S."/>
            <person name="Gloux S."/>
            <person name="Godrie T."/>
            <person name="Goffeau A."/>
            <person name="Kahn D."/>
            <person name="Kiss E."/>
            <person name="Lelaure V."/>
            <person name="Masuy D."/>
            <person name="Pohl T."/>
            <person name="Portetelle D."/>
            <person name="Puehler A."/>
            <person name="Purnelle B."/>
            <person name="Ramsperger U."/>
            <person name="Renard C."/>
            <person name="Thebault P."/>
            <person name="Vandenbol M."/>
            <person name="Weidner S."/>
            <person name="Galibert F."/>
        </authorList>
    </citation>
    <scope>NUCLEOTIDE SEQUENCE [LARGE SCALE GENOMIC DNA]</scope>
    <source>
        <strain>1021</strain>
    </source>
</reference>
<reference key="3">
    <citation type="journal article" date="2001" name="Science">
        <title>The composite genome of the legume symbiont Sinorhizobium meliloti.</title>
        <authorList>
            <person name="Galibert F."/>
            <person name="Finan T.M."/>
            <person name="Long S.R."/>
            <person name="Puehler A."/>
            <person name="Abola P."/>
            <person name="Ampe F."/>
            <person name="Barloy-Hubler F."/>
            <person name="Barnett M.J."/>
            <person name="Becker A."/>
            <person name="Boistard P."/>
            <person name="Bothe G."/>
            <person name="Boutry M."/>
            <person name="Bowser L."/>
            <person name="Buhrmester J."/>
            <person name="Cadieu E."/>
            <person name="Capela D."/>
            <person name="Chain P."/>
            <person name="Cowie A."/>
            <person name="Davis R.W."/>
            <person name="Dreano S."/>
            <person name="Federspiel N.A."/>
            <person name="Fisher R.F."/>
            <person name="Gloux S."/>
            <person name="Godrie T."/>
            <person name="Goffeau A."/>
            <person name="Golding B."/>
            <person name="Gouzy J."/>
            <person name="Gurjal M."/>
            <person name="Hernandez-Lucas I."/>
            <person name="Hong A."/>
            <person name="Huizar L."/>
            <person name="Hyman R.W."/>
            <person name="Jones T."/>
            <person name="Kahn D."/>
            <person name="Kahn M.L."/>
            <person name="Kalman S."/>
            <person name="Keating D.H."/>
            <person name="Kiss E."/>
            <person name="Komp C."/>
            <person name="Lelaure V."/>
            <person name="Masuy D."/>
            <person name="Palm C."/>
            <person name="Peck M.C."/>
            <person name="Pohl T.M."/>
            <person name="Portetelle D."/>
            <person name="Purnelle B."/>
            <person name="Ramsperger U."/>
            <person name="Surzycki R."/>
            <person name="Thebault P."/>
            <person name="Vandenbol M."/>
            <person name="Vorhoelter F.J."/>
            <person name="Weidner S."/>
            <person name="Wells D.H."/>
            <person name="Wong K."/>
            <person name="Yeh K.-C."/>
            <person name="Batut J."/>
        </authorList>
    </citation>
    <scope>NUCLEOTIDE SEQUENCE [LARGE SCALE GENOMIC DNA]</scope>
    <source>
        <strain>1021</strain>
    </source>
</reference>
<protein>
    <recommendedName>
        <fullName>Uncharacterized protein R00369</fullName>
    </recommendedName>
</protein>
<sequence length="124" mass="13575">MLYAVLCYNDESVTSAWSKEEDERVMRDLSAVQRKYVEAGKLGPVARLVPTTAAATLRHSAGETIVMDGPFAETKEQLLGFYLIDCASLDEALDFARDLSNANPSTGSYEVRPLALYKPGELPS</sequence>
<feature type="chain" id="PRO_0000160638" description="Uncharacterized protein R00369">
    <location>
        <begin position="1"/>
        <end position="124"/>
    </location>
</feature>
<feature type="sequence conflict" description="In Ref. 1; AAA91098." evidence="1" ref="1">
    <original>DLSNANPSTGSYEVRPLALYKPGELPS</original>
    <variation>ASE</variation>
    <location>
        <begin position="98"/>
        <end position="124"/>
    </location>
</feature>
<organism>
    <name type="scientific">Rhizobium meliloti (strain 1021)</name>
    <name type="common">Ensifer meliloti</name>
    <name type="synonym">Sinorhizobium meliloti</name>
    <dbReference type="NCBI Taxonomy" id="266834"/>
    <lineage>
        <taxon>Bacteria</taxon>
        <taxon>Pseudomonadati</taxon>
        <taxon>Pseudomonadota</taxon>
        <taxon>Alphaproteobacteria</taxon>
        <taxon>Hyphomicrobiales</taxon>
        <taxon>Rhizobiaceae</taxon>
        <taxon>Sinorhizobium/Ensifer group</taxon>
        <taxon>Sinorhizobium</taxon>
    </lineage>
</organism>
<comment type="similarity">
    <text evidence="1">Belongs to the YciI family.</text>
</comment>